<protein>
    <recommendedName>
        <fullName evidence="1">Large ribosomal subunit protein uL1</fullName>
    </recommendedName>
    <alternativeName>
        <fullName evidence="2">50S ribosomal protein L1</fullName>
    </alternativeName>
</protein>
<dbReference type="EMBL" id="CP001341">
    <property type="protein sequence ID" value="ACL40670.1"/>
    <property type="molecule type" value="Genomic_DNA"/>
</dbReference>
<dbReference type="RefSeq" id="WP_015937867.1">
    <property type="nucleotide sequence ID" value="NC_011886.1"/>
</dbReference>
<dbReference type="SMR" id="B8HD24"/>
<dbReference type="STRING" id="452863.Achl_2705"/>
<dbReference type="KEGG" id="ach:Achl_2705"/>
<dbReference type="eggNOG" id="COG0081">
    <property type="taxonomic scope" value="Bacteria"/>
</dbReference>
<dbReference type="HOGENOM" id="CLU_062853_0_0_11"/>
<dbReference type="OrthoDB" id="9803740at2"/>
<dbReference type="Proteomes" id="UP000002505">
    <property type="component" value="Chromosome"/>
</dbReference>
<dbReference type="GO" id="GO:0015934">
    <property type="term" value="C:large ribosomal subunit"/>
    <property type="evidence" value="ECO:0007669"/>
    <property type="project" value="InterPro"/>
</dbReference>
<dbReference type="GO" id="GO:0019843">
    <property type="term" value="F:rRNA binding"/>
    <property type="evidence" value="ECO:0007669"/>
    <property type="project" value="UniProtKB-UniRule"/>
</dbReference>
<dbReference type="GO" id="GO:0003735">
    <property type="term" value="F:structural constituent of ribosome"/>
    <property type="evidence" value="ECO:0007669"/>
    <property type="project" value="InterPro"/>
</dbReference>
<dbReference type="GO" id="GO:0000049">
    <property type="term" value="F:tRNA binding"/>
    <property type="evidence" value="ECO:0007669"/>
    <property type="project" value="UniProtKB-KW"/>
</dbReference>
<dbReference type="GO" id="GO:0006417">
    <property type="term" value="P:regulation of translation"/>
    <property type="evidence" value="ECO:0007669"/>
    <property type="project" value="UniProtKB-KW"/>
</dbReference>
<dbReference type="GO" id="GO:0006412">
    <property type="term" value="P:translation"/>
    <property type="evidence" value="ECO:0007669"/>
    <property type="project" value="UniProtKB-UniRule"/>
</dbReference>
<dbReference type="CDD" id="cd00403">
    <property type="entry name" value="Ribosomal_L1"/>
    <property type="match status" value="1"/>
</dbReference>
<dbReference type="FunFam" id="3.40.50.790:FF:000001">
    <property type="entry name" value="50S ribosomal protein L1"/>
    <property type="match status" value="1"/>
</dbReference>
<dbReference type="Gene3D" id="3.30.190.20">
    <property type="match status" value="1"/>
</dbReference>
<dbReference type="Gene3D" id="3.40.50.790">
    <property type="match status" value="1"/>
</dbReference>
<dbReference type="HAMAP" id="MF_01318_B">
    <property type="entry name" value="Ribosomal_uL1_B"/>
    <property type="match status" value="1"/>
</dbReference>
<dbReference type="InterPro" id="IPR005878">
    <property type="entry name" value="Ribosom_uL1_bac-type"/>
</dbReference>
<dbReference type="InterPro" id="IPR002143">
    <property type="entry name" value="Ribosomal_uL1"/>
</dbReference>
<dbReference type="InterPro" id="IPR023674">
    <property type="entry name" value="Ribosomal_uL1-like"/>
</dbReference>
<dbReference type="InterPro" id="IPR028364">
    <property type="entry name" value="Ribosomal_uL1/biogenesis"/>
</dbReference>
<dbReference type="InterPro" id="IPR016095">
    <property type="entry name" value="Ribosomal_uL1_3-a/b-sand"/>
</dbReference>
<dbReference type="InterPro" id="IPR023673">
    <property type="entry name" value="Ribosomal_uL1_CS"/>
</dbReference>
<dbReference type="NCBIfam" id="TIGR01169">
    <property type="entry name" value="rplA_bact"/>
    <property type="match status" value="1"/>
</dbReference>
<dbReference type="PANTHER" id="PTHR36427">
    <property type="entry name" value="54S RIBOSOMAL PROTEIN L1, MITOCHONDRIAL"/>
    <property type="match status" value="1"/>
</dbReference>
<dbReference type="PANTHER" id="PTHR36427:SF3">
    <property type="entry name" value="LARGE RIBOSOMAL SUBUNIT PROTEIN UL1M"/>
    <property type="match status" value="1"/>
</dbReference>
<dbReference type="Pfam" id="PF00687">
    <property type="entry name" value="Ribosomal_L1"/>
    <property type="match status" value="1"/>
</dbReference>
<dbReference type="PIRSF" id="PIRSF002155">
    <property type="entry name" value="Ribosomal_L1"/>
    <property type="match status" value="1"/>
</dbReference>
<dbReference type="SUPFAM" id="SSF56808">
    <property type="entry name" value="Ribosomal protein L1"/>
    <property type="match status" value="1"/>
</dbReference>
<dbReference type="PROSITE" id="PS01199">
    <property type="entry name" value="RIBOSOMAL_L1"/>
    <property type="match status" value="1"/>
</dbReference>
<evidence type="ECO:0000255" key="1">
    <source>
        <dbReference type="HAMAP-Rule" id="MF_01318"/>
    </source>
</evidence>
<evidence type="ECO:0000305" key="2"/>
<feature type="chain" id="PRO_1000165655" description="Large ribosomal subunit protein uL1">
    <location>
        <begin position="1"/>
        <end position="235"/>
    </location>
</feature>
<keyword id="KW-0678">Repressor</keyword>
<keyword id="KW-0687">Ribonucleoprotein</keyword>
<keyword id="KW-0689">Ribosomal protein</keyword>
<keyword id="KW-0694">RNA-binding</keyword>
<keyword id="KW-0699">rRNA-binding</keyword>
<keyword id="KW-0810">Translation regulation</keyword>
<keyword id="KW-0820">tRNA-binding</keyword>
<proteinExistence type="inferred from homology"/>
<comment type="function">
    <text evidence="1">Binds directly to 23S rRNA. The L1 stalk is quite mobile in the ribosome, and is involved in E site tRNA release.</text>
</comment>
<comment type="function">
    <text evidence="1">Protein L1 is also a translational repressor protein, it controls the translation of the L11 operon by binding to its mRNA.</text>
</comment>
<comment type="subunit">
    <text evidence="1">Part of the 50S ribosomal subunit.</text>
</comment>
<comment type="similarity">
    <text evidence="1">Belongs to the universal ribosomal protein uL1 family.</text>
</comment>
<organism>
    <name type="scientific">Pseudarthrobacter chlorophenolicus (strain ATCC 700700 / DSM 12829 / CIP 107037 / JCM 12360 / KCTC 9906 / NCIMB 13794 / A6)</name>
    <name type="common">Arthrobacter chlorophenolicus</name>
    <dbReference type="NCBI Taxonomy" id="452863"/>
    <lineage>
        <taxon>Bacteria</taxon>
        <taxon>Bacillati</taxon>
        <taxon>Actinomycetota</taxon>
        <taxon>Actinomycetes</taxon>
        <taxon>Micrococcales</taxon>
        <taxon>Micrococcaceae</taxon>
        <taxon>Pseudarthrobacter</taxon>
    </lineage>
</organism>
<sequence>MAKRSKAYEAAAAKIDAEKSYAPFEAVTLAKDTNPSKFDATIEVAFRLGVDPRKADQMVRGTVNLPHGTGKTARVLVFATGDKAEAAIAAGADFVGSDDLIEKIAGGWTDFDAAVATPDLMGKVGRLGKVLGPRNLMPNPKTGTVTPDVTKAVNDIKGGKIDFRVDKHSNLHFIIGKVSFDAVKLAENYAAALEEVLRLKPSASKGRYIQKATVATTFGPGISVDPNVTKVLTEA</sequence>
<name>RL1_PSECP</name>
<gene>
    <name evidence="1" type="primary">rplA</name>
    <name type="ordered locus">Achl_2705</name>
</gene>
<reference key="1">
    <citation type="submission" date="2009-01" db="EMBL/GenBank/DDBJ databases">
        <title>Complete sequence of chromosome of Arthrobacter chlorophenolicus A6.</title>
        <authorList>
            <consortium name="US DOE Joint Genome Institute"/>
            <person name="Lucas S."/>
            <person name="Copeland A."/>
            <person name="Lapidus A."/>
            <person name="Glavina del Rio T."/>
            <person name="Tice H."/>
            <person name="Bruce D."/>
            <person name="Goodwin L."/>
            <person name="Pitluck S."/>
            <person name="Goltsman E."/>
            <person name="Clum A."/>
            <person name="Larimer F."/>
            <person name="Land M."/>
            <person name="Hauser L."/>
            <person name="Kyrpides N."/>
            <person name="Mikhailova N."/>
            <person name="Jansson J."/>
            <person name="Richardson P."/>
        </authorList>
    </citation>
    <scope>NUCLEOTIDE SEQUENCE [LARGE SCALE GENOMIC DNA]</scope>
    <source>
        <strain>ATCC 700700 / DSM 12829 / CIP 107037 / JCM 12360 / KCTC 9906 / NCIMB 13794 / A6</strain>
    </source>
</reference>
<accession>B8HD24</accession>